<organism>
    <name type="scientific">Aeromonas hydrophila subsp. hydrophila (strain ATCC 7966 / DSM 30187 / BCRC 13018 / CCUG 14551 / JCM 1027 / KCTC 2358 / NCIMB 9240 / NCTC 8049)</name>
    <dbReference type="NCBI Taxonomy" id="380703"/>
    <lineage>
        <taxon>Bacteria</taxon>
        <taxon>Pseudomonadati</taxon>
        <taxon>Pseudomonadota</taxon>
        <taxon>Gammaproteobacteria</taxon>
        <taxon>Aeromonadales</taxon>
        <taxon>Aeromonadaceae</taxon>
        <taxon>Aeromonas</taxon>
    </lineage>
</organism>
<reference key="1">
    <citation type="journal article" date="2006" name="J. Bacteriol.">
        <title>Genome sequence of Aeromonas hydrophila ATCC 7966T: jack of all trades.</title>
        <authorList>
            <person name="Seshadri R."/>
            <person name="Joseph S.W."/>
            <person name="Chopra A.K."/>
            <person name="Sha J."/>
            <person name="Shaw J."/>
            <person name="Graf J."/>
            <person name="Haft D.H."/>
            <person name="Wu M."/>
            <person name="Ren Q."/>
            <person name="Rosovitz M.J."/>
            <person name="Madupu R."/>
            <person name="Tallon L."/>
            <person name="Kim M."/>
            <person name="Jin S."/>
            <person name="Vuong H."/>
            <person name="Stine O.C."/>
            <person name="Ali A."/>
            <person name="Horneman A.J."/>
            <person name="Heidelberg J.F."/>
        </authorList>
    </citation>
    <scope>NUCLEOTIDE SEQUENCE [LARGE SCALE GENOMIC DNA]</scope>
    <source>
        <strain>ATCC 7966 / DSM 30187 / BCRC 13018 / CCUG 14551 / JCM 1027 / KCTC 2358 / NCIMB 9240 / NCTC 8049</strain>
    </source>
</reference>
<comment type="function">
    <text evidence="1">Catalyzes the reversible isomerization-deamination of glucosamine 6-phosphate (GlcN6P) to form fructose 6-phosphate (Fru6P) and ammonium ion.</text>
</comment>
<comment type="catalytic activity">
    <reaction evidence="1">
        <text>alpha-D-glucosamine 6-phosphate + H2O = beta-D-fructose 6-phosphate + NH4(+)</text>
        <dbReference type="Rhea" id="RHEA:12172"/>
        <dbReference type="ChEBI" id="CHEBI:15377"/>
        <dbReference type="ChEBI" id="CHEBI:28938"/>
        <dbReference type="ChEBI" id="CHEBI:57634"/>
        <dbReference type="ChEBI" id="CHEBI:75989"/>
        <dbReference type="EC" id="3.5.99.6"/>
    </reaction>
</comment>
<comment type="activity regulation">
    <text evidence="1">Allosterically activated by N-acetylglucosamine 6-phosphate (GlcNAc6P).</text>
</comment>
<comment type="pathway">
    <text evidence="1">Amino-sugar metabolism; N-acetylneuraminate degradation; D-fructose 6-phosphate from N-acetylneuraminate: step 5/5.</text>
</comment>
<comment type="subunit">
    <text evidence="1">Homohexamer.</text>
</comment>
<comment type="similarity">
    <text evidence="1">Belongs to the glucosamine/galactosamine-6-phosphate isomerase family. NagB subfamily.</text>
</comment>
<feature type="chain" id="PRO_1000066948" description="Glucosamine-6-phosphate deaminase">
    <location>
        <begin position="1"/>
        <end position="266"/>
    </location>
</feature>
<feature type="active site" description="Proton acceptor; for enolization step" evidence="1">
    <location>
        <position position="72"/>
    </location>
</feature>
<feature type="active site" description="For ring-opening step" evidence="1">
    <location>
        <position position="141"/>
    </location>
</feature>
<feature type="active site" description="Proton acceptor; for ring-opening step" evidence="1">
    <location>
        <position position="143"/>
    </location>
</feature>
<feature type="active site" description="For ring-opening step" evidence="1">
    <location>
        <position position="148"/>
    </location>
</feature>
<feature type="site" description="Part of the allosteric site" evidence="1">
    <location>
        <position position="151"/>
    </location>
</feature>
<feature type="site" description="Part of the allosteric site" evidence="1">
    <location>
        <position position="158"/>
    </location>
</feature>
<feature type="site" description="Part of the allosteric site" evidence="1">
    <location>
        <position position="160"/>
    </location>
</feature>
<feature type="site" description="Part of the allosteric site" evidence="1">
    <location>
        <position position="161"/>
    </location>
</feature>
<feature type="site" description="Part of the allosteric site" evidence="1">
    <location>
        <position position="254"/>
    </location>
</feature>
<gene>
    <name evidence="1" type="primary">nagB</name>
    <name type="ordered locus">AHA_1526</name>
</gene>
<proteinExistence type="inferred from homology"/>
<sequence length="266" mass="29618">MRLIPLKSASQVGLWSARYIVDRINGFKPTAERPFVLGLPTGGTPLNTYKRLIELHKAGEVSFQNVVTFNMDEYVGLPEDHPESYHSFMHNNFFSHIDIRPENINILNGNAPDLVAECKRYEDKIKSYGKIHLFMGGVGNDGHIAFNEPASSLSSRTRVKTLTEDTRIANSRFFGGDMEQVPKLALTVGVGTLMDAEEIMILVTGHGKAQALQAAVEGSVNHMWTISTLQLHPKGMMVCDEPSTMELKVKTVRYFQQLEAANIGRL</sequence>
<name>NAGB_AERHH</name>
<protein>
    <recommendedName>
        <fullName evidence="1">Glucosamine-6-phosphate deaminase</fullName>
        <ecNumber evidence="1">3.5.99.6</ecNumber>
    </recommendedName>
    <alternativeName>
        <fullName evidence="1">GlcN6P deaminase</fullName>
        <shortName evidence="1">GNPDA</shortName>
    </alternativeName>
    <alternativeName>
        <fullName evidence="1">Glucosamine-6-phosphate isomerase</fullName>
    </alternativeName>
</protein>
<accession>A0KIG3</accession>
<keyword id="KW-0021">Allosteric enzyme</keyword>
<keyword id="KW-0119">Carbohydrate metabolism</keyword>
<keyword id="KW-0378">Hydrolase</keyword>
<keyword id="KW-1185">Reference proteome</keyword>
<dbReference type="EC" id="3.5.99.6" evidence="1"/>
<dbReference type="EMBL" id="CP000462">
    <property type="protein sequence ID" value="ABK39009.1"/>
    <property type="molecule type" value="Genomic_DNA"/>
</dbReference>
<dbReference type="RefSeq" id="WP_011705423.1">
    <property type="nucleotide sequence ID" value="NC_008570.1"/>
</dbReference>
<dbReference type="RefSeq" id="YP_856064.1">
    <property type="nucleotide sequence ID" value="NC_008570.1"/>
</dbReference>
<dbReference type="SMR" id="A0KIG3"/>
<dbReference type="STRING" id="380703.AHA_1526"/>
<dbReference type="EnsemblBacteria" id="ABK39009">
    <property type="protein sequence ID" value="ABK39009"/>
    <property type="gene ID" value="AHA_1526"/>
</dbReference>
<dbReference type="GeneID" id="4487216"/>
<dbReference type="KEGG" id="aha:AHA_1526"/>
<dbReference type="PATRIC" id="fig|380703.7.peg.1539"/>
<dbReference type="eggNOG" id="COG0363">
    <property type="taxonomic scope" value="Bacteria"/>
</dbReference>
<dbReference type="HOGENOM" id="CLU_049611_0_1_6"/>
<dbReference type="OrthoDB" id="9791139at2"/>
<dbReference type="UniPathway" id="UPA00629">
    <property type="reaction ID" value="UER00684"/>
</dbReference>
<dbReference type="Proteomes" id="UP000000756">
    <property type="component" value="Chromosome"/>
</dbReference>
<dbReference type="GO" id="GO:0005737">
    <property type="term" value="C:cytoplasm"/>
    <property type="evidence" value="ECO:0007669"/>
    <property type="project" value="TreeGrafter"/>
</dbReference>
<dbReference type="GO" id="GO:0004342">
    <property type="term" value="F:glucosamine-6-phosphate deaminase activity"/>
    <property type="evidence" value="ECO:0007669"/>
    <property type="project" value="UniProtKB-UniRule"/>
</dbReference>
<dbReference type="GO" id="GO:0042802">
    <property type="term" value="F:identical protein binding"/>
    <property type="evidence" value="ECO:0007669"/>
    <property type="project" value="TreeGrafter"/>
</dbReference>
<dbReference type="GO" id="GO:0005975">
    <property type="term" value="P:carbohydrate metabolic process"/>
    <property type="evidence" value="ECO:0007669"/>
    <property type="project" value="InterPro"/>
</dbReference>
<dbReference type="GO" id="GO:0006043">
    <property type="term" value="P:glucosamine catabolic process"/>
    <property type="evidence" value="ECO:0007669"/>
    <property type="project" value="TreeGrafter"/>
</dbReference>
<dbReference type="GO" id="GO:0006046">
    <property type="term" value="P:N-acetylglucosamine catabolic process"/>
    <property type="evidence" value="ECO:0007669"/>
    <property type="project" value="TreeGrafter"/>
</dbReference>
<dbReference type="GO" id="GO:0019262">
    <property type="term" value="P:N-acetylneuraminate catabolic process"/>
    <property type="evidence" value="ECO:0007669"/>
    <property type="project" value="UniProtKB-UniRule"/>
</dbReference>
<dbReference type="CDD" id="cd01399">
    <property type="entry name" value="GlcN6P_deaminase"/>
    <property type="match status" value="1"/>
</dbReference>
<dbReference type="FunFam" id="3.40.50.1360:FF:000002">
    <property type="entry name" value="Glucosamine-6-phosphate deaminase"/>
    <property type="match status" value="1"/>
</dbReference>
<dbReference type="Gene3D" id="3.40.50.1360">
    <property type="match status" value="1"/>
</dbReference>
<dbReference type="HAMAP" id="MF_01241">
    <property type="entry name" value="GlcN6P_deamin"/>
    <property type="match status" value="1"/>
</dbReference>
<dbReference type="InterPro" id="IPR006148">
    <property type="entry name" value="Glc/Gal-6P_isomerase"/>
</dbReference>
<dbReference type="InterPro" id="IPR004547">
    <property type="entry name" value="Glucosamine6P_isomerase"/>
</dbReference>
<dbReference type="InterPro" id="IPR018321">
    <property type="entry name" value="Glucosamine6P_isomerase_CS"/>
</dbReference>
<dbReference type="InterPro" id="IPR037171">
    <property type="entry name" value="NagB/RpiA_transferase-like"/>
</dbReference>
<dbReference type="NCBIfam" id="TIGR00502">
    <property type="entry name" value="nagB"/>
    <property type="match status" value="1"/>
</dbReference>
<dbReference type="NCBIfam" id="NF001685">
    <property type="entry name" value="PRK00443.1-5"/>
    <property type="match status" value="1"/>
</dbReference>
<dbReference type="PANTHER" id="PTHR11280">
    <property type="entry name" value="GLUCOSAMINE-6-PHOSPHATE ISOMERASE"/>
    <property type="match status" value="1"/>
</dbReference>
<dbReference type="PANTHER" id="PTHR11280:SF5">
    <property type="entry name" value="GLUCOSAMINE-6-PHOSPHATE ISOMERASE"/>
    <property type="match status" value="1"/>
</dbReference>
<dbReference type="Pfam" id="PF01182">
    <property type="entry name" value="Glucosamine_iso"/>
    <property type="match status" value="1"/>
</dbReference>
<dbReference type="SUPFAM" id="SSF100950">
    <property type="entry name" value="NagB/RpiA/CoA transferase-like"/>
    <property type="match status" value="1"/>
</dbReference>
<dbReference type="PROSITE" id="PS01161">
    <property type="entry name" value="GLC_GALNAC_ISOMERASE"/>
    <property type="match status" value="1"/>
</dbReference>
<evidence type="ECO:0000255" key="1">
    <source>
        <dbReference type="HAMAP-Rule" id="MF_01241"/>
    </source>
</evidence>